<gene>
    <name evidence="2" type="primary">tyrS</name>
    <name type="ordered locus">Z2650</name>
    <name type="ordered locus">ECs2346</name>
</gene>
<proteinExistence type="inferred from homology"/>
<organism>
    <name type="scientific">Escherichia coli O157:H7</name>
    <dbReference type="NCBI Taxonomy" id="83334"/>
    <lineage>
        <taxon>Bacteria</taxon>
        <taxon>Pseudomonadati</taxon>
        <taxon>Pseudomonadota</taxon>
        <taxon>Gammaproteobacteria</taxon>
        <taxon>Enterobacterales</taxon>
        <taxon>Enterobacteriaceae</taxon>
        <taxon>Escherichia</taxon>
    </lineage>
</organism>
<comment type="function">
    <text evidence="2">Catalyzes the attachment of tyrosine to tRNA(Tyr) in a two-step reaction: tyrosine is first activated by ATP to form Tyr-AMP and then transferred to the acceptor end of tRNA(Tyr).</text>
</comment>
<comment type="catalytic activity">
    <reaction evidence="2">
        <text>tRNA(Tyr) + L-tyrosine + ATP = L-tyrosyl-tRNA(Tyr) + AMP + diphosphate + H(+)</text>
        <dbReference type="Rhea" id="RHEA:10220"/>
        <dbReference type="Rhea" id="RHEA-COMP:9706"/>
        <dbReference type="Rhea" id="RHEA-COMP:9707"/>
        <dbReference type="ChEBI" id="CHEBI:15378"/>
        <dbReference type="ChEBI" id="CHEBI:30616"/>
        <dbReference type="ChEBI" id="CHEBI:33019"/>
        <dbReference type="ChEBI" id="CHEBI:58315"/>
        <dbReference type="ChEBI" id="CHEBI:78442"/>
        <dbReference type="ChEBI" id="CHEBI:78536"/>
        <dbReference type="ChEBI" id="CHEBI:456215"/>
        <dbReference type="EC" id="6.1.1.1"/>
    </reaction>
</comment>
<comment type="subunit">
    <text evidence="2">Homodimer.</text>
</comment>
<comment type="subcellular location">
    <subcellularLocation>
        <location evidence="2">Cytoplasm</location>
    </subcellularLocation>
</comment>
<comment type="similarity">
    <text evidence="2">Belongs to the class-I aminoacyl-tRNA synthetase family. TyrS type 1 subfamily.</text>
</comment>
<comment type="sequence caution" evidence="3">
    <conflict type="erroneous initiation">
        <sequence resource="EMBL-CDS" id="AAG56626"/>
    </conflict>
</comment>
<keyword id="KW-0007">Acetylation</keyword>
<keyword id="KW-0030">Aminoacyl-tRNA synthetase</keyword>
<keyword id="KW-0067">ATP-binding</keyword>
<keyword id="KW-0963">Cytoplasm</keyword>
<keyword id="KW-0436">Ligase</keyword>
<keyword id="KW-0547">Nucleotide-binding</keyword>
<keyword id="KW-0648">Protein biosynthesis</keyword>
<keyword id="KW-1185">Reference proteome</keyword>
<keyword id="KW-0694">RNA-binding</keyword>
<protein>
    <recommendedName>
        <fullName evidence="2">Tyrosine--tRNA ligase</fullName>
        <ecNumber evidence="2">6.1.1.1</ecNumber>
    </recommendedName>
    <alternativeName>
        <fullName evidence="2">Tyrosyl-tRNA synthetase</fullName>
        <shortName evidence="2">TyrRS</shortName>
    </alternativeName>
</protein>
<evidence type="ECO:0000250" key="1"/>
<evidence type="ECO:0000255" key="2">
    <source>
        <dbReference type="HAMAP-Rule" id="MF_02006"/>
    </source>
</evidence>
<evidence type="ECO:0000305" key="3"/>
<reference key="1">
    <citation type="journal article" date="2001" name="Nature">
        <title>Genome sequence of enterohaemorrhagic Escherichia coli O157:H7.</title>
        <authorList>
            <person name="Perna N.T."/>
            <person name="Plunkett G. III"/>
            <person name="Burland V."/>
            <person name="Mau B."/>
            <person name="Glasner J.D."/>
            <person name="Rose D.J."/>
            <person name="Mayhew G.F."/>
            <person name="Evans P.S."/>
            <person name="Gregor J."/>
            <person name="Kirkpatrick H.A."/>
            <person name="Posfai G."/>
            <person name="Hackett J."/>
            <person name="Klink S."/>
            <person name="Boutin A."/>
            <person name="Shao Y."/>
            <person name="Miller L."/>
            <person name="Grotbeck E.J."/>
            <person name="Davis N.W."/>
            <person name="Lim A."/>
            <person name="Dimalanta E.T."/>
            <person name="Potamousis K."/>
            <person name="Apodaca J."/>
            <person name="Anantharaman T.S."/>
            <person name="Lin J."/>
            <person name="Yen G."/>
            <person name="Schwartz D.C."/>
            <person name="Welch R.A."/>
            <person name="Blattner F.R."/>
        </authorList>
    </citation>
    <scope>NUCLEOTIDE SEQUENCE [LARGE SCALE GENOMIC DNA]</scope>
    <source>
        <strain>O157:H7 / EDL933 / ATCC 700927 / EHEC</strain>
    </source>
</reference>
<reference key="2">
    <citation type="journal article" date="2001" name="DNA Res.">
        <title>Complete genome sequence of enterohemorrhagic Escherichia coli O157:H7 and genomic comparison with a laboratory strain K-12.</title>
        <authorList>
            <person name="Hayashi T."/>
            <person name="Makino K."/>
            <person name="Ohnishi M."/>
            <person name="Kurokawa K."/>
            <person name="Ishii K."/>
            <person name="Yokoyama K."/>
            <person name="Han C.-G."/>
            <person name="Ohtsubo E."/>
            <person name="Nakayama K."/>
            <person name="Murata T."/>
            <person name="Tanaka M."/>
            <person name="Tobe T."/>
            <person name="Iida T."/>
            <person name="Takami H."/>
            <person name="Honda T."/>
            <person name="Sasakawa C."/>
            <person name="Ogasawara N."/>
            <person name="Yasunaga T."/>
            <person name="Kuhara S."/>
            <person name="Shiba T."/>
            <person name="Hattori M."/>
            <person name="Shinagawa H."/>
        </authorList>
    </citation>
    <scope>NUCLEOTIDE SEQUENCE [LARGE SCALE GENOMIC DNA]</scope>
    <source>
        <strain>O157:H7 / Sakai / RIMD 0509952 / EHEC</strain>
    </source>
</reference>
<name>SYY_ECO57</name>
<accession>P0AGK0</accession>
<accession>P00951</accession>
<feature type="initiator methionine" description="Removed" evidence="1">
    <location>
        <position position="1"/>
    </location>
</feature>
<feature type="chain" id="PRO_0000055653" description="Tyrosine--tRNA ligase">
    <location>
        <begin position="2"/>
        <end position="424"/>
    </location>
</feature>
<feature type="domain" description="S4 RNA-binding" evidence="2">
    <location>
        <begin position="357"/>
        <end position="414"/>
    </location>
</feature>
<feature type="short sequence motif" description="'HIGH' region">
    <location>
        <begin position="42"/>
        <end position="51"/>
    </location>
</feature>
<feature type="short sequence motif" description="'KMSKS' region">
    <location>
        <begin position="235"/>
        <end position="239"/>
    </location>
</feature>
<feature type="binding site" evidence="2">
    <location>
        <position position="37"/>
    </location>
    <ligand>
        <name>L-tyrosine</name>
        <dbReference type="ChEBI" id="CHEBI:58315"/>
    </ligand>
</feature>
<feature type="binding site" evidence="2">
    <location>
        <position position="175"/>
    </location>
    <ligand>
        <name>L-tyrosine</name>
        <dbReference type="ChEBI" id="CHEBI:58315"/>
    </ligand>
</feature>
<feature type="binding site" evidence="2">
    <location>
        <position position="179"/>
    </location>
    <ligand>
        <name>L-tyrosine</name>
        <dbReference type="ChEBI" id="CHEBI:58315"/>
    </ligand>
</feature>
<feature type="binding site" evidence="2">
    <location>
        <position position="238"/>
    </location>
    <ligand>
        <name>ATP</name>
        <dbReference type="ChEBI" id="CHEBI:30616"/>
    </ligand>
</feature>
<feature type="site" description="Can cross link with tRNA periodate oxidized" evidence="1">
    <location>
        <position position="231"/>
    </location>
</feature>
<feature type="site" description="Can cross link with tRNA periodate oxidized; predominant" evidence="1">
    <location>
        <position position="235"/>
    </location>
</feature>
<feature type="site" description="Can cross link with tRNA periodate oxidized" evidence="1">
    <location>
        <position position="238"/>
    </location>
</feature>
<feature type="modified residue" description="N6-acetyllysine" evidence="2">
    <location>
        <position position="144"/>
    </location>
</feature>
<dbReference type="EC" id="6.1.1.1" evidence="2"/>
<dbReference type="EMBL" id="AE005174">
    <property type="protein sequence ID" value="AAG56626.1"/>
    <property type="status" value="ALT_INIT"/>
    <property type="molecule type" value="Genomic_DNA"/>
</dbReference>
<dbReference type="EMBL" id="BA000007">
    <property type="protein sequence ID" value="BAB35769.1"/>
    <property type="molecule type" value="Genomic_DNA"/>
</dbReference>
<dbReference type="PIR" id="B90922">
    <property type="entry name" value="B90922"/>
</dbReference>
<dbReference type="RefSeq" id="NP_310373.1">
    <property type="nucleotide sequence ID" value="NC_002695.1"/>
</dbReference>
<dbReference type="RefSeq" id="WP_001295400.1">
    <property type="nucleotide sequence ID" value="NZ_VOAI01000007.1"/>
</dbReference>
<dbReference type="SMR" id="P0AGK0"/>
<dbReference type="STRING" id="155864.Z2650"/>
<dbReference type="GeneID" id="913060"/>
<dbReference type="GeneID" id="93775791"/>
<dbReference type="KEGG" id="ece:Z2650"/>
<dbReference type="KEGG" id="ecs:ECs_2346"/>
<dbReference type="PATRIC" id="fig|386585.9.peg.2455"/>
<dbReference type="eggNOG" id="COG0162">
    <property type="taxonomic scope" value="Bacteria"/>
</dbReference>
<dbReference type="HOGENOM" id="CLU_024003_0_3_6"/>
<dbReference type="OMA" id="YMMAKDS"/>
<dbReference type="Proteomes" id="UP000000558">
    <property type="component" value="Chromosome"/>
</dbReference>
<dbReference type="Proteomes" id="UP000002519">
    <property type="component" value="Chromosome"/>
</dbReference>
<dbReference type="GO" id="GO:0005829">
    <property type="term" value="C:cytosol"/>
    <property type="evidence" value="ECO:0007669"/>
    <property type="project" value="TreeGrafter"/>
</dbReference>
<dbReference type="GO" id="GO:0005524">
    <property type="term" value="F:ATP binding"/>
    <property type="evidence" value="ECO:0007669"/>
    <property type="project" value="UniProtKB-UniRule"/>
</dbReference>
<dbReference type="GO" id="GO:0003723">
    <property type="term" value="F:RNA binding"/>
    <property type="evidence" value="ECO:0007669"/>
    <property type="project" value="UniProtKB-KW"/>
</dbReference>
<dbReference type="GO" id="GO:0004831">
    <property type="term" value="F:tyrosine-tRNA ligase activity"/>
    <property type="evidence" value="ECO:0007669"/>
    <property type="project" value="UniProtKB-UniRule"/>
</dbReference>
<dbReference type="GO" id="GO:0006437">
    <property type="term" value="P:tyrosyl-tRNA aminoacylation"/>
    <property type="evidence" value="ECO:0007669"/>
    <property type="project" value="UniProtKB-UniRule"/>
</dbReference>
<dbReference type="CDD" id="cd00165">
    <property type="entry name" value="S4"/>
    <property type="match status" value="1"/>
</dbReference>
<dbReference type="CDD" id="cd00805">
    <property type="entry name" value="TyrRS_core"/>
    <property type="match status" value="1"/>
</dbReference>
<dbReference type="FunFam" id="1.10.240.10:FF:000001">
    <property type="entry name" value="Tyrosine--tRNA ligase"/>
    <property type="match status" value="1"/>
</dbReference>
<dbReference type="FunFam" id="3.10.290.10:FF:000007">
    <property type="entry name" value="Tyrosine--tRNA ligase"/>
    <property type="match status" value="1"/>
</dbReference>
<dbReference type="FunFam" id="3.40.50.620:FF:000008">
    <property type="entry name" value="Tyrosine--tRNA ligase"/>
    <property type="match status" value="1"/>
</dbReference>
<dbReference type="Gene3D" id="3.40.50.620">
    <property type="entry name" value="HUPs"/>
    <property type="match status" value="1"/>
</dbReference>
<dbReference type="Gene3D" id="3.10.290.10">
    <property type="entry name" value="RNA-binding S4 domain"/>
    <property type="match status" value="1"/>
</dbReference>
<dbReference type="Gene3D" id="1.10.240.10">
    <property type="entry name" value="Tyrosyl-Transfer RNA Synthetase"/>
    <property type="match status" value="1"/>
</dbReference>
<dbReference type="HAMAP" id="MF_02006">
    <property type="entry name" value="Tyr_tRNA_synth_type1"/>
    <property type="match status" value="1"/>
</dbReference>
<dbReference type="InterPro" id="IPR001412">
    <property type="entry name" value="aa-tRNA-synth_I_CS"/>
</dbReference>
<dbReference type="InterPro" id="IPR002305">
    <property type="entry name" value="aa-tRNA-synth_Ic"/>
</dbReference>
<dbReference type="InterPro" id="IPR014729">
    <property type="entry name" value="Rossmann-like_a/b/a_fold"/>
</dbReference>
<dbReference type="InterPro" id="IPR002942">
    <property type="entry name" value="S4_RNA-bd"/>
</dbReference>
<dbReference type="InterPro" id="IPR036986">
    <property type="entry name" value="S4_RNA-bd_sf"/>
</dbReference>
<dbReference type="InterPro" id="IPR054608">
    <property type="entry name" value="SYY-like_C"/>
</dbReference>
<dbReference type="InterPro" id="IPR002307">
    <property type="entry name" value="Tyr-tRNA-ligase"/>
</dbReference>
<dbReference type="InterPro" id="IPR024088">
    <property type="entry name" value="Tyr-tRNA-ligase_bac-type"/>
</dbReference>
<dbReference type="InterPro" id="IPR024107">
    <property type="entry name" value="Tyr-tRNA-ligase_bac_1"/>
</dbReference>
<dbReference type="NCBIfam" id="TIGR00234">
    <property type="entry name" value="tyrS"/>
    <property type="match status" value="1"/>
</dbReference>
<dbReference type="PANTHER" id="PTHR11766:SF0">
    <property type="entry name" value="TYROSINE--TRNA LIGASE, MITOCHONDRIAL"/>
    <property type="match status" value="1"/>
</dbReference>
<dbReference type="PANTHER" id="PTHR11766">
    <property type="entry name" value="TYROSYL-TRNA SYNTHETASE"/>
    <property type="match status" value="1"/>
</dbReference>
<dbReference type="Pfam" id="PF22421">
    <property type="entry name" value="SYY_C-terminal"/>
    <property type="match status" value="1"/>
</dbReference>
<dbReference type="Pfam" id="PF00579">
    <property type="entry name" value="tRNA-synt_1b"/>
    <property type="match status" value="1"/>
</dbReference>
<dbReference type="PRINTS" id="PR01040">
    <property type="entry name" value="TRNASYNTHTYR"/>
</dbReference>
<dbReference type="SMART" id="SM00363">
    <property type="entry name" value="S4"/>
    <property type="match status" value="1"/>
</dbReference>
<dbReference type="SUPFAM" id="SSF55174">
    <property type="entry name" value="Alpha-L RNA-binding motif"/>
    <property type="match status" value="1"/>
</dbReference>
<dbReference type="SUPFAM" id="SSF52374">
    <property type="entry name" value="Nucleotidylyl transferase"/>
    <property type="match status" value="1"/>
</dbReference>
<dbReference type="PROSITE" id="PS00178">
    <property type="entry name" value="AA_TRNA_LIGASE_I"/>
    <property type="match status" value="1"/>
</dbReference>
<dbReference type="PROSITE" id="PS50889">
    <property type="entry name" value="S4"/>
    <property type="match status" value="1"/>
</dbReference>
<sequence>MASSNLIKQLQERGLVAQVTDEEALAERLAQGPIALYCGFDPTADSLHLGHLVPLLCLKRFQQAGHKPVALVGGATGLIGDPSFKAAERKLNTEETVQEWVDKIRKQVAPFLDFDCGENSAIAANNYDWFGNMNVLTFLRDIGKHFSVNQMINKEAVKQRLNREDQGISFTEFSYNLLQGYDFACLNKQYGVVLQIGGSDQWGNITSGIDLTRRLHQNQVFGLTVPLITKADGTKFGKTEGGAVWLDPKKTSPYKFYQFWINTADADVYRFLKFFTFMSIEEINALEEEDKNSGKAPRAQYVLAEQVTRLVHGEEGLQAAKRITECLFSGSLSALSEADFEQLAQDGVPMVEMEKGADLMQALVDSELQPSRGQARKTIASNAITINGEKQSDPEYFFKEEDRLFGRFTLLRRGKKNYCLICWK</sequence>